<name>TM252_PONAB</name>
<dbReference type="EMBL" id="CR857286">
    <property type="protein sequence ID" value="CAH89582.1"/>
    <property type="molecule type" value="mRNA"/>
</dbReference>
<dbReference type="RefSeq" id="NP_001127170.1">
    <property type="nucleotide sequence ID" value="NM_001133698.2"/>
</dbReference>
<dbReference type="FunCoup" id="Q5RF75">
    <property type="interactions" value="78"/>
</dbReference>
<dbReference type="GeneID" id="100174222"/>
<dbReference type="KEGG" id="pon:100174222"/>
<dbReference type="CTD" id="169693"/>
<dbReference type="eggNOG" id="ENOG502S6KQ">
    <property type="taxonomic scope" value="Eukaryota"/>
</dbReference>
<dbReference type="InParanoid" id="Q5RF75"/>
<dbReference type="OrthoDB" id="9896070at2759"/>
<dbReference type="Proteomes" id="UP000001595">
    <property type="component" value="Unplaced"/>
</dbReference>
<dbReference type="GO" id="GO:0016020">
    <property type="term" value="C:membrane"/>
    <property type="evidence" value="ECO:0007669"/>
    <property type="project" value="UniProtKB-SubCell"/>
</dbReference>
<dbReference type="InterPro" id="IPR031363">
    <property type="entry name" value="TMEM252"/>
</dbReference>
<dbReference type="PANTHER" id="PTHR35682">
    <property type="entry name" value="TRANSMEMBRANE PROTEIN 252"/>
    <property type="match status" value="1"/>
</dbReference>
<dbReference type="PANTHER" id="PTHR35682:SF1">
    <property type="entry name" value="TRANSMEMBRANE PROTEIN 252"/>
    <property type="match status" value="1"/>
</dbReference>
<dbReference type="Pfam" id="PF15664">
    <property type="entry name" value="TMEM252"/>
    <property type="match status" value="1"/>
</dbReference>
<protein>
    <recommendedName>
        <fullName>Transmembrane protein 252</fullName>
    </recommendedName>
</protein>
<organism>
    <name type="scientific">Pongo abelii</name>
    <name type="common">Sumatran orangutan</name>
    <name type="synonym">Pongo pygmaeus abelii</name>
    <dbReference type="NCBI Taxonomy" id="9601"/>
    <lineage>
        <taxon>Eukaryota</taxon>
        <taxon>Metazoa</taxon>
        <taxon>Chordata</taxon>
        <taxon>Craniata</taxon>
        <taxon>Vertebrata</taxon>
        <taxon>Euteleostomi</taxon>
        <taxon>Mammalia</taxon>
        <taxon>Eutheria</taxon>
        <taxon>Euarchontoglires</taxon>
        <taxon>Primates</taxon>
        <taxon>Haplorrhini</taxon>
        <taxon>Catarrhini</taxon>
        <taxon>Hominidae</taxon>
        <taxon>Pongo</taxon>
    </lineage>
</organism>
<accession>Q5RF75</accession>
<sequence>MQNRTGLILCALALLMGFLMVCLGAFFISWGSIFDCQGSLIAAYLLLPLGFVILLSGIFWSNYRQVTESKGVLRHMLRQHLAHGALSVATVDRPDFYPPAYEESLEVEKQSCPAEREASGIPPPLYTETGLEFQDGNDSHPEAPPSYRESIASLVVTAISEDAQRRGQEC</sequence>
<evidence type="ECO:0000255" key="1"/>
<evidence type="ECO:0000256" key="2">
    <source>
        <dbReference type="SAM" id="MobiDB-lite"/>
    </source>
</evidence>
<evidence type="ECO:0000305" key="3"/>
<keyword id="KW-0472">Membrane</keyword>
<keyword id="KW-1185">Reference proteome</keyword>
<keyword id="KW-0812">Transmembrane</keyword>
<keyword id="KW-1133">Transmembrane helix</keyword>
<reference key="1">
    <citation type="submission" date="2004-11" db="EMBL/GenBank/DDBJ databases">
        <authorList>
            <consortium name="The German cDNA consortium"/>
        </authorList>
    </citation>
    <scope>NUCLEOTIDE SEQUENCE [LARGE SCALE MRNA]</scope>
    <source>
        <tissue>Kidney</tissue>
    </source>
</reference>
<feature type="chain" id="PRO_0000089709" description="Transmembrane protein 252">
    <location>
        <begin position="1"/>
        <end position="170"/>
    </location>
</feature>
<feature type="transmembrane region" description="Helical" evidence="1">
    <location>
        <begin position="8"/>
        <end position="28"/>
    </location>
</feature>
<feature type="transmembrane region" description="Helical" evidence="1">
    <location>
        <begin position="40"/>
        <end position="60"/>
    </location>
</feature>
<feature type="region of interest" description="Disordered" evidence="2">
    <location>
        <begin position="112"/>
        <end position="147"/>
    </location>
</feature>
<gene>
    <name type="primary">TMEM252</name>
</gene>
<comment type="subcellular location">
    <subcellularLocation>
        <location evidence="3">Membrane</location>
        <topology evidence="3">Multi-pass membrane protein</topology>
    </subcellularLocation>
</comment>
<proteinExistence type="evidence at transcript level"/>